<reference key="1">
    <citation type="journal article" date="2005" name="Nature">
        <title>The map-based sequence of the rice genome.</title>
        <authorList>
            <consortium name="International rice genome sequencing project (IRGSP)"/>
        </authorList>
    </citation>
    <scope>NUCLEOTIDE SEQUENCE [LARGE SCALE GENOMIC DNA]</scope>
    <source>
        <strain>cv. Nipponbare</strain>
    </source>
</reference>
<reference key="2">
    <citation type="journal article" date="2008" name="Nucleic Acids Res.">
        <title>The rice annotation project database (RAP-DB): 2008 update.</title>
        <authorList>
            <consortium name="The rice annotation project (RAP)"/>
        </authorList>
    </citation>
    <scope>GENOME REANNOTATION</scope>
    <source>
        <strain>cv. Nipponbare</strain>
    </source>
</reference>
<reference key="3">
    <citation type="journal article" date="2013" name="Rice">
        <title>Improvement of the Oryza sativa Nipponbare reference genome using next generation sequence and optical map data.</title>
        <authorList>
            <person name="Kawahara Y."/>
            <person name="de la Bastide M."/>
            <person name="Hamilton J.P."/>
            <person name="Kanamori H."/>
            <person name="McCombie W.R."/>
            <person name="Ouyang S."/>
            <person name="Schwartz D.C."/>
            <person name="Tanaka T."/>
            <person name="Wu J."/>
            <person name="Zhou S."/>
            <person name="Childs K.L."/>
            <person name="Davidson R.M."/>
            <person name="Lin H."/>
            <person name="Quesada-Ocampo L."/>
            <person name="Vaillancourt B."/>
            <person name="Sakai H."/>
            <person name="Lee S.S."/>
            <person name="Kim J."/>
            <person name="Numa H."/>
            <person name="Itoh T."/>
            <person name="Buell C.R."/>
            <person name="Matsumoto T."/>
        </authorList>
    </citation>
    <scope>GENOME REANNOTATION</scope>
    <source>
        <strain>cv. Nipponbare</strain>
    </source>
</reference>
<reference key="4">
    <citation type="journal article" date="2003" name="Science">
        <title>Collection, mapping, and annotation of over 28,000 cDNA clones from japonica rice.</title>
        <authorList>
            <consortium name="The rice full-length cDNA consortium"/>
        </authorList>
    </citation>
    <scope>NUCLEOTIDE SEQUENCE [LARGE SCALE MRNA]</scope>
    <source>
        <strain>cv. Nipponbare</strain>
    </source>
</reference>
<comment type="function">
    <text evidence="1">Plays a central role in 2-thiolation of mcm(5)S(2)U at tRNA wobble positions of tRNA(Lys), tRNA(Glu) and tRNA(Gln). Directly binds tRNAs and probably acts by catalyzing adenylation of tRNAs, an intermediate required for 2-thiolation. It is unclear whether it acts as a sulfurtransferase that transfers sulfur from thiocarboxylated URM1 onto the uridine of tRNAs at wobble position.</text>
</comment>
<comment type="pathway">
    <text evidence="1">tRNA modification; 5-methoxycarbonylmethyl-2-thiouridine-tRNA biosynthesis.</text>
</comment>
<comment type="subcellular location">
    <subcellularLocation>
        <location evidence="1">Cytoplasm</location>
    </subcellularLocation>
</comment>
<comment type="similarity">
    <text evidence="1">Belongs to the TtcA family. CTU1/NCS6/ATPBD3 subfamily.</text>
</comment>
<proteinExistence type="evidence at transcript level"/>
<evidence type="ECO:0000255" key="1">
    <source>
        <dbReference type="HAMAP-Rule" id="MF_03053"/>
    </source>
</evidence>
<evidence type="ECO:0000256" key="2">
    <source>
        <dbReference type="SAM" id="MobiDB-lite"/>
    </source>
</evidence>
<dbReference type="EC" id="2.7.7.-" evidence="1"/>
<dbReference type="EMBL" id="AP005002">
    <property type="protein sequence ID" value="BAD17212.1"/>
    <property type="molecule type" value="Genomic_DNA"/>
</dbReference>
<dbReference type="EMBL" id="AP008208">
    <property type="protein sequence ID" value="BAF10117.1"/>
    <property type="molecule type" value="Genomic_DNA"/>
</dbReference>
<dbReference type="EMBL" id="AP014958">
    <property type="protein sequence ID" value="BAS81043.1"/>
    <property type="molecule type" value="Genomic_DNA"/>
</dbReference>
<dbReference type="EMBL" id="AK106684">
    <property type="protein sequence ID" value="BAG97795.1"/>
    <property type="molecule type" value="mRNA"/>
</dbReference>
<dbReference type="RefSeq" id="XP_015623486.1">
    <property type="nucleotide sequence ID" value="XM_015768000.1"/>
</dbReference>
<dbReference type="RefSeq" id="XP_015623487.1">
    <property type="nucleotide sequence ID" value="XM_015768001.1"/>
</dbReference>
<dbReference type="SMR" id="Q6Z6G6"/>
<dbReference type="FunCoup" id="Q6Z6G6">
    <property type="interactions" value="1699"/>
</dbReference>
<dbReference type="STRING" id="39947.Q6Z6G6"/>
<dbReference type="PaxDb" id="39947-Q6Z6G6"/>
<dbReference type="EnsemblPlants" id="Os02t0762300-01">
    <property type="protein sequence ID" value="Os02t0762300-01"/>
    <property type="gene ID" value="Os02g0762300"/>
</dbReference>
<dbReference type="Gramene" id="Os02t0762300-01">
    <property type="protein sequence ID" value="Os02t0762300-01"/>
    <property type="gene ID" value="Os02g0762300"/>
</dbReference>
<dbReference type="KEGG" id="dosa:Os02g0762300"/>
<dbReference type="eggNOG" id="KOG2840">
    <property type="taxonomic scope" value="Eukaryota"/>
</dbReference>
<dbReference type="HOGENOM" id="CLU_026481_1_2_1"/>
<dbReference type="InParanoid" id="Q6Z6G6"/>
<dbReference type="OMA" id="KPVRGIC"/>
<dbReference type="OrthoDB" id="198857at2759"/>
<dbReference type="UniPathway" id="UPA00988"/>
<dbReference type="Proteomes" id="UP000000763">
    <property type="component" value="Chromosome 2"/>
</dbReference>
<dbReference type="Proteomes" id="UP000059680">
    <property type="component" value="Chromosome 2"/>
</dbReference>
<dbReference type="GO" id="GO:0002144">
    <property type="term" value="C:cytosolic tRNA wobble base thiouridylase complex"/>
    <property type="evidence" value="ECO:0000318"/>
    <property type="project" value="GO_Central"/>
</dbReference>
<dbReference type="GO" id="GO:0016779">
    <property type="term" value="F:nucleotidyltransferase activity"/>
    <property type="evidence" value="ECO:0007669"/>
    <property type="project" value="UniProtKB-UniRule"/>
</dbReference>
<dbReference type="GO" id="GO:0000049">
    <property type="term" value="F:tRNA binding"/>
    <property type="evidence" value="ECO:0000318"/>
    <property type="project" value="GO_Central"/>
</dbReference>
<dbReference type="GO" id="GO:0032447">
    <property type="term" value="P:protein urmylation"/>
    <property type="evidence" value="ECO:0007669"/>
    <property type="project" value="UniProtKB-UniRule"/>
</dbReference>
<dbReference type="GO" id="GO:0002143">
    <property type="term" value="P:tRNA wobble position uridine thiolation"/>
    <property type="evidence" value="ECO:0000318"/>
    <property type="project" value="GO_Central"/>
</dbReference>
<dbReference type="CDD" id="cd01713">
    <property type="entry name" value="CTU1-like"/>
    <property type="match status" value="1"/>
</dbReference>
<dbReference type="FunFam" id="3.40.50.620:FF:000054">
    <property type="entry name" value="Cytoplasmic tRNA 2-thiolation protein 1"/>
    <property type="match status" value="1"/>
</dbReference>
<dbReference type="Gene3D" id="3.40.50.620">
    <property type="entry name" value="HUPs"/>
    <property type="match status" value="1"/>
</dbReference>
<dbReference type="HAMAP" id="MF_03053">
    <property type="entry name" value="CTU1"/>
    <property type="match status" value="1"/>
</dbReference>
<dbReference type="InterPro" id="IPR056369">
    <property type="entry name" value="CTU1-like_ATP-bd"/>
</dbReference>
<dbReference type="InterPro" id="IPR032442">
    <property type="entry name" value="CTU1_C"/>
</dbReference>
<dbReference type="InterPro" id="IPR000541">
    <property type="entry name" value="Ncs6/Tuc1/Ctu1"/>
</dbReference>
<dbReference type="InterPro" id="IPR014729">
    <property type="entry name" value="Rossmann-like_a/b/a_fold"/>
</dbReference>
<dbReference type="InterPro" id="IPR011063">
    <property type="entry name" value="TilS/TtcA_N"/>
</dbReference>
<dbReference type="InterPro" id="IPR035107">
    <property type="entry name" value="tRNA_thiolation_TtcA_Ctu1"/>
</dbReference>
<dbReference type="NCBIfam" id="TIGR00269">
    <property type="entry name" value="TIGR00269 family protein"/>
    <property type="match status" value="1"/>
</dbReference>
<dbReference type="PANTHER" id="PTHR11807">
    <property type="entry name" value="ATPASES OF THE PP SUPERFAMILY-RELATED"/>
    <property type="match status" value="1"/>
</dbReference>
<dbReference type="PANTHER" id="PTHR11807:SF12">
    <property type="entry name" value="CYTOPLASMIC TRNA 2-THIOLATION PROTEIN 1"/>
    <property type="match status" value="1"/>
</dbReference>
<dbReference type="Pfam" id="PF01171">
    <property type="entry name" value="ATP_bind_3"/>
    <property type="match status" value="1"/>
</dbReference>
<dbReference type="Pfam" id="PF16503">
    <property type="entry name" value="zn-ribbon_14"/>
    <property type="match status" value="1"/>
</dbReference>
<dbReference type="PIRSF" id="PIRSF004976">
    <property type="entry name" value="ATPase_YdaO"/>
    <property type="match status" value="1"/>
</dbReference>
<dbReference type="SUPFAM" id="SSF52402">
    <property type="entry name" value="Adenine nucleotide alpha hydrolases-like"/>
    <property type="match status" value="1"/>
</dbReference>
<name>CTU1_ORYSJ</name>
<accession>Q6Z6G6</accession>
<accession>A0A0P0VPQ0</accession>
<sequence>MDSAVDGPRQPPARAGSRLCTRCGERKAALKRPKTLEQICRECFYVVFEDEIHQTIVDNNLFKPGDRVAIGASGGKDSTVLAYVLSELNRRHKYCLDLFLLSVDEGITGYRDDSLETVKRNEIQYGLPLKIVSYKDLYGWTMDDIVKAIGLKNNCTFCGVFRRQALDRGAALLKVDKIVTGHNADDIAETVLLNILRGDIARLSRCTFITTGEDGPIPRCKPFKYTYEKEIVMYAYFKKLDYFSTECIYSPNAYRGFAREFIKDLERMRPRAILDIIKSGENFRISTTTRMPEQGTCERCGYISSQKLCKACVLLDGLNRGLPKLGIGRTKGIAGGDGDCEQQATRSERNRSSLQGKHGNFDF</sequence>
<feature type="chain" id="PRO_0000368255" description="Cytoplasmic tRNA 2-thiolation protein 1">
    <location>
        <begin position="1"/>
        <end position="363"/>
    </location>
</feature>
<feature type="region of interest" description="Disordered" evidence="2">
    <location>
        <begin position="337"/>
        <end position="363"/>
    </location>
</feature>
<keyword id="KW-0963">Cytoplasm</keyword>
<keyword id="KW-1185">Reference proteome</keyword>
<keyword id="KW-0694">RNA-binding</keyword>
<keyword id="KW-0808">Transferase</keyword>
<keyword id="KW-0819">tRNA processing</keyword>
<keyword id="KW-0820">tRNA-binding</keyword>
<organism>
    <name type="scientific">Oryza sativa subsp. japonica</name>
    <name type="common">Rice</name>
    <dbReference type="NCBI Taxonomy" id="39947"/>
    <lineage>
        <taxon>Eukaryota</taxon>
        <taxon>Viridiplantae</taxon>
        <taxon>Streptophyta</taxon>
        <taxon>Embryophyta</taxon>
        <taxon>Tracheophyta</taxon>
        <taxon>Spermatophyta</taxon>
        <taxon>Magnoliopsida</taxon>
        <taxon>Liliopsida</taxon>
        <taxon>Poales</taxon>
        <taxon>Poaceae</taxon>
        <taxon>BOP clade</taxon>
        <taxon>Oryzoideae</taxon>
        <taxon>Oryzeae</taxon>
        <taxon>Oryzinae</taxon>
        <taxon>Oryza</taxon>
        <taxon>Oryza sativa</taxon>
    </lineage>
</organism>
<protein>
    <recommendedName>
        <fullName evidence="1">Cytoplasmic tRNA 2-thiolation protein 1</fullName>
        <ecNumber evidence="1">2.7.7.-</ecNumber>
    </recommendedName>
    <alternativeName>
        <fullName evidence="1">Cytoplasmic tRNA adenylyltransferase 1</fullName>
    </alternativeName>
</protein>
<gene>
    <name evidence="1" type="primary">NCS6</name>
    <name evidence="1" type="synonym">CTU1</name>
    <name type="ordered locus">Os02g0762300</name>
    <name type="ordered locus">LOC_Os02g52470</name>
    <name type="ORF">P0486G03.16</name>
</gene>